<gene>
    <name type="primary">pntB</name>
    <name type="ordered locus">Z2597</name>
    <name type="ordered locus">ECs2308</name>
</gene>
<sequence>MSGGLVTAAYIVAAILFIFSLAGLSKHETSRQGNNFGIAGMAIALIATIFGPDTGNVGWILLAMVIGGAIGIRLAKKVEMTEMPELVAILHSFVGLAAVLVGFNSYLHHDAGMAPILVNIHLTEVFLGIFIGAVTFTGSVVAFGKLCGKISSKPLMLPNRHKMNLAALVVSFLLLIVFVRTDSVGLQVLALLIMTAIALVFGWHLVASIGGADMPVVVSMLNSYSGWAAAAAGFMLSNDLLIVTGALVGSSGAILSYIMCKAMNRSFISVIAGGFGTDGSSTGDDQEVGEHREITAEETAELLKNSHSVIITPGYGMAVAQAQYPVAEITEKLRARGINVRFGIHPVAGRLPGHMNVLLAEAKVPYDIVLEMDEINDDFADTDTVLVIGANDTVNPAAQDDPKSPIAGMPVLEVWKAQNVIVFKRSMNTGYAGVQNPLFFKENTHMLFGDAKASVDAILKAL</sequence>
<reference key="1">
    <citation type="journal article" date="2001" name="Nature">
        <title>Genome sequence of enterohaemorrhagic Escherichia coli O157:H7.</title>
        <authorList>
            <person name="Perna N.T."/>
            <person name="Plunkett G. III"/>
            <person name="Burland V."/>
            <person name="Mau B."/>
            <person name="Glasner J.D."/>
            <person name="Rose D.J."/>
            <person name="Mayhew G.F."/>
            <person name="Evans P.S."/>
            <person name="Gregor J."/>
            <person name="Kirkpatrick H.A."/>
            <person name="Posfai G."/>
            <person name="Hackett J."/>
            <person name="Klink S."/>
            <person name="Boutin A."/>
            <person name="Shao Y."/>
            <person name="Miller L."/>
            <person name="Grotbeck E.J."/>
            <person name="Davis N.W."/>
            <person name="Lim A."/>
            <person name="Dimalanta E.T."/>
            <person name="Potamousis K."/>
            <person name="Apodaca J."/>
            <person name="Anantharaman T.S."/>
            <person name="Lin J."/>
            <person name="Yen G."/>
            <person name="Schwartz D.C."/>
            <person name="Welch R.A."/>
            <person name="Blattner F.R."/>
        </authorList>
    </citation>
    <scope>NUCLEOTIDE SEQUENCE [LARGE SCALE GENOMIC DNA]</scope>
    <source>
        <strain>O157:H7 / EDL933 / ATCC 700927 / EHEC</strain>
    </source>
</reference>
<reference key="2">
    <citation type="journal article" date="2001" name="DNA Res.">
        <title>Complete genome sequence of enterohemorrhagic Escherichia coli O157:H7 and genomic comparison with a laboratory strain K-12.</title>
        <authorList>
            <person name="Hayashi T."/>
            <person name="Makino K."/>
            <person name="Ohnishi M."/>
            <person name="Kurokawa K."/>
            <person name="Ishii K."/>
            <person name="Yokoyama K."/>
            <person name="Han C.-G."/>
            <person name="Ohtsubo E."/>
            <person name="Nakayama K."/>
            <person name="Murata T."/>
            <person name="Tanaka M."/>
            <person name="Tobe T."/>
            <person name="Iida T."/>
            <person name="Takami H."/>
            <person name="Honda T."/>
            <person name="Sasakawa C."/>
            <person name="Ogasawara N."/>
            <person name="Yasunaga T."/>
            <person name="Kuhara S."/>
            <person name="Shiba T."/>
            <person name="Hattori M."/>
            <person name="Shinagawa H."/>
        </authorList>
    </citation>
    <scope>NUCLEOTIDE SEQUENCE [LARGE SCALE GENOMIC DNA]</scope>
    <source>
        <strain>O157:H7 / Sakai / RIMD 0509952 / EHEC</strain>
    </source>
</reference>
<keyword id="KW-0997">Cell inner membrane</keyword>
<keyword id="KW-1003">Cell membrane</keyword>
<keyword id="KW-0472">Membrane</keyword>
<keyword id="KW-0520">NAD</keyword>
<keyword id="KW-0521">NADP</keyword>
<keyword id="KW-1185">Reference proteome</keyword>
<keyword id="KW-1278">Translocase</keyword>
<keyword id="KW-0812">Transmembrane</keyword>
<keyword id="KW-1133">Transmembrane helix</keyword>
<feature type="chain" id="PRO_0000199024" description="NAD(P) transhydrogenase subunit beta">
    <location>
        <begin position="1"/>
        <end position="462"/>
    </location>
</feature>
<feature type="topological domain" description="Periplasmic" evidence="2">
    <location>
        <begin position="1"/>
        <end position="3"/>
    </location>
</feature>
<feature type="transmembrane region" description="Helical" evidence="2">
    <location>
        <begin position="4"/>
        <end position="24"/>
    </location>
</feature>
<feature type="topological domain" description="Cytoplasmic" evidence="2">
    <location>
        <begin position="25"/>
        <end position="45"/>
    </location>
</feature>
<feature type="transmembrane region" description="Helical" evidence="2">
    <location>
        <begin position="46"/>
        <end position="66"/>
    </location>
</feature>
<feature type="topological domain" description="Periplasmic" evidence="2">
    <location>
        <begin position="67"/>
        <end position="82"/>
    </location>
</feature>
<feature type="transmembrane region" description="Helical" evidence="2">
    <location>
        <begin position="83"/>
        <end position="103"/>
    </location>
</feature>
<feature type="topological domain" description="Cytoplasmic" evidence="2">
    <location>
        <begin position="104"/>
        <end position="115"/>
    </location>
</feature>
<feature type="transmembrane region" description="Helical" evidence="2">
    <location>
        <begin position="116"/>
        <end position="136"/>
    </location>
</feature>
<feature type="topological domain" description="Periplasmic" evidence="2">
    <location>
        <begin position="137"/>
        <end position="164"/>
    </location>
</feature>
<feature type="transmembrane region" description="Helical" evidence="2">
    <location>
        <begin position="165"/>
        <end position="185"/>
    </location>
</feature>
<feature type="topological domain" description="Cytoplasmic" evidence="2">
    <location>
        <begin position="186"/>
        <end position="188"/>
    </location>
</feature>
<feature type="transmembrane region" description="Helical" evidence="2">
    <location>
        <begin position="189"/>
        <end position="209"/>
    </location>
</feature>
<feature type="topological domain" description="Periplasmic" evidence="2">
    <location>
        <begin position="210"/>
        <end position="215"/>
    </location>
</feature>
<feature type="transmembrane region" description="Helical" evidence="2">
    <location>
        <begin position="216"/>
        <end position="236"/>
    </location>
</feature>
<feature type="topological domain" description="Cytoplasmic" evidence="2">
    <location>
        <begin position="237"/>
        <end position="239"/>
    </location>
</feature>
<feature type="transmembrane region" description="Helical" evidence="2">
    <location>
        <begin position="240"/>
        <end position="260"/>
    </location>
</feature>
<feature type="topological domain" description="Periplasmic" evidence="2">
    <location>
        <begin position="261"/>
        <end position="308"/>
    </location>
</feature>
<feature type="transmembrane region" description="Helical" evidence="2">
    <location>
        <begin position="309"/>
        <end position="329"/>
    </location>
</feature>
<feature type="topological domain" description="Cytoplasmic" evidence="2">
    <location>
        <begin position="330"/>
        <end position="462"/>
    </location>
</feature>
<organism>
    <name type="scientific">Escherichia coli O157:H7</name>
    <dbReference type="NCBI Taxonomy" id="83334"/>
    <lineage>
        <taxon>Bacteria</taxon>
        <taxon>Pseudomonadati</taxon>
        <taxon>Pseudomonadota</taxon>
        <taxon>Gammaproteobacteria</taxon>
        <taxon>Enterobacterales</taxon>
        <taxon>Enterobacteriaceae</taxon>
        <taxon>Escherichia</taxon>
    </lineage>
</organism>
<dbReference type="EC" id="7.1.1.1"/>
<dbReference type="EMBL" id="AE005174">
    <property type="protein sequence ID" value="AAG56589.1"/>
    <property type="molecule type" value="Genomic_DNA"/>
</dbReference>
<dbReference type="EMBL" id="BA000007">
    <property type="protein sequence ID" value="BAB35731.1"/>
    <property type="molecule type" value="Genomic_DNA"/>
</dbReference>
<dbReference type="PIR" id="A85766">
    <property type="entry name" value="A85766"/>
</dbReference>
<dbReference type="PIR" id="D90917">
    <property type="entry name" value="D90917"/>
</dbReference>
<dbReference type="RefSeq" id="NP_310335.1">
    <property type="nucleotide sequence ID" value="NC_002695.1"/>
</dbReference>
<dbReference type="RefSeq" id="WP_000014036.1">
    <property type="nucleotide sequence ID" value="NZ_VOAI01000007.1"/>
</dbReference>
<dbReference type="BMRB" id="P0AB69"/>
<dbReference type="SMR" id="P0AB69"/>
<dbReference type="STRING" id="155864.Z2597"/>
<dbReference type="GeneID" id="913582"/>
<dbReference type="GeneID" id="93775750"/>
<dbReference type="KEGG" id="ece:Z2597"/>
<dbReference type="KEGG" id="ecs:ECs_2308"/>
<dbReference type="PATRIC" id="fig|386585.9.peg.2418"/>
<dbReference type="eggNOG" id="COG1282">
    <property type="taxonomic scope" value="Bacteria"/>
</dbReference>
<dbReference type="HOGENOM" id="CLU_007866_4_0_6"/>
<dbReference type="OMA" id="NDVVNPQ"/>
<dbReference type="Proteomes" id="UP000000558">
    <property type="component" value="Chromosome"/>
</dbReference>
<dbReference type="Proteomes" id="UP000002519">
    <property type="component" value="Chromosome"/>
</dbReference>
<dbReference type="GO" id="GO:0005886">
    <property type="term" value="C:plasma membrane"/>
    <property type="evidence" value="ECO:0007669"/>
    <property type="project" value="UniProtKB-SubCell"/>
</dbReference>
<dbReference type="GO" id="GO:0050661">
    <property type="term" value="F:NADP binding"/>
    <property type="evidence" value="ECO:0007669"/>
    <property type="project" value="InterPro"/>
</dbReference>
<dbReference type="GO" id="GO:0008750">
    <property type="term" value="F:proton-translocating NAD(P)+ transhydrogenase activity"/>
    <property type="evidence" value="ECO:0007669"/>
    <property type="project" value="UniProtKB-EC"/>
</dbReference>
<dbReference type="FunFam" id="3.40.50.1220:FF:000002">
    <property type="entry name" value="NAD(P) transhydrogenase subunit beta"/>
    <property type="match status" value="1"/>
</dbReference>
<dbReference type="Gene3D" id="3.40.50.1220">
    <property type="entry name" value="TPP-binding domain"/>
    <property type="match status" value="1"/>
</dbReference>
<dbReference type="InterPro" id="IPR029035">
    <property type="entry name" value="DHS-like_NAD/FAD-binding_dom"/>
</dbReference>
<dbReference type="InterPro" id="IPR012136">
    <property type="entry name" value="NADH_DH_b"/>
</dbReference>
<dbReference type="InterPro" id="IPR034300">
    <property type="entry name" value="PNTB-like"/>
</dbReference>
<dbReference type="NCBIfam" id="NF006974">
    <property type="entry name" value="PRK09444.1"/>
    <property type="match status" value="1"/>
</dbReference>
<dbReference type="PANTHER" id="PTHR44758">
    <property type="entry name" value="NAD(P) TRANSHYDROGENASE SUBUNIT BETA"/>
    <property type="match status" value="1"/>
</dbReference>
<dbReference type="PANTHER" id="PTHR44758:SF1">
    <property type="entry name" value="NAD(P) TRANSHYDROGENASE SUBUNIT BETA"/>
    <property type="match status" value="1"/>
</dbReference>
<dbReference type="Pfam" id="PF02233">
    <property type="entry name" value="PNTB"/>
    <property type="match status" value="1"/>
</dbReference>
<dbReference type="PIRSF" id="PIRSF000204">
    <property type="entry name" value="PNTB"/>
    <property type="match status" value="1"/>
</dbReference>
<dbReference type="SUPFAM" id="SSF52467">
    <property type="entry name" value="DHS-like NAD/FAD-binding domain"/>
    <property type="match status" value="1"/>
</dbReference>
<name>PNTB_ECO57</name>
<evidence type="ECO:0000250" key="1"/>
<evidence type="ECO:0000255" key="2"/>
<evidence type="ECO:0000305" key="3"/>
<accession>P0AB69</accession>
<accession>P07002</accession>
<accession>P76890</accession>
<comment type="function">
    <text evidence="1">The transhydrogenation between NADH and NADP is coupled to respiration and ATP hydrolysis and functions as a proton pump across the membrane.</text>
</comment>
<comment type="catalytic activity">
    <reaction>
        <text>NAD(+) + NADPH + H(+)(in) = NADH + NADP(+) + H(+)(out)</text>
        <dbReference type="Rhea" id="RHEA:47992"/>
        <dbReference type="ChEBI" id="CHEBI:15378"/>
        <dbReference type="ChEBI" id="CHEBI:57540"/>
        <dbReference type="ChEBI" id="CHEBI:57783"/>
        <dbReference type="ChEBI" id="CHEBI:57945"/>
        <dbReference type="ChEBI" id="CHEBI:58349"/>
        <dbReference type="EC" id="7.1.1.1"/>
    </reaction>
</comment>
<comment type="subunit">
    <text evidence="1">Heterodimer of an alpha and a beta chain.</text>
</comment>
<comment type="subcellular location">
    <subcellularLocation>
        <location evidence="1">Cell inner membrane</location>
        <topology evidence="1">Multi-pass membrane protein</topology>
    </subcellularLocation>
</comment>
<comment type="similarity">
    <text evidence="3">Belongs to the PNT beta subunit family.</text>
</comment>
<protein>
    <recommendedName>
        <fullName>NAD(P) transhydrogenase subunit beta</fullName>
        <ecNumber>7.1.1.1</ecNumber>
    </recommendedName>
    <alternativeName>
        <fullName>Nicotinamide nucleotide transhydrogenase subunit beta</fullName>
    </alternativeName>
    <alternativeName>
        <fullName>Pyridine nucleotide transhydrogenase subunit beta</fullName>
    </alternativeName>
</protein>
<proteinExistence type="inferred from homology"/>